<dbReference type="EMBL" id="Z00006">
    <property type="protein sequence ID" value="CAA77297.1"/>
    <property type="molecule type" value="Genomic_DNA"/>
</dbReference>
<dbReference type="EMBL" id="AC245015">
    <property type="status" value="NOT_ANNOTATED_CDS"/>
    <property type="molecule type" value="Genomic_DNA"/>
</dbReference>
<dbReference type="SMR" id="P0DP09"/>
<dbReference type="FunCoup" id="P0DP09">
    <property type="interactions" value="539"/>
</dbReference>
<dbReference type="IMGT_GENE-DB" id="IGKV1-13"/>
<dbReference type="BioMuta" id="HGNC:5731"/>
<dbReference type="jPOST" id="P0DP09"/>
<dbReference type="MassIVE" id="P0DP09"/>
<dbReference type="AGR" id="HGNC:5731"/>
<dbReference type="GeneCards" id="IGKV1-13"/>
<dbReference type="HGNC" id="HGNC:5731">
    <property type="gene designation" value="IGKV1-13"/>
</dbReference>
<dbReference type="HPA" id="ENSG00000276566">
    <property type="expression patterns" value="Group enriched (intestine, lymphoid tissue)"/>
</dbReference>
<dbReference type="neXtProt" id="NX_P0DP09"/>
<dbReference type="OpenTargets" id="ENSG00000276566"/>
<dbReference type="VEuPathDB" id="HostDB:ENSG00000276566"/>
<dbReference type="GeneTree" id="ENSGT00940000153048"/>
<dbReference type="InParanoid" id="P0DP09"/>
<dbReference type="OMA" id="IVAINCQ"/>
<dbReference type="OrthoDB" id="9629570at2759"/>
<dbReference type="PAN-GO" id="P0DP09">
    <property type="GO annotations" value="3 GO annotations based on evolutionary models"/>
</dbReference>
<dbReference type="Pharos" id="P0DP09">
    <property type="development level" value="Tdark"/>
</dbReference>
<dbReference type="PRO" id="PR:P0DP09"/>
<dbReference type="Proteomes" id="UP000005640">
    <property type="component" value="Unplaced"/>
</dbReference>
<dbReference type="RNAct" id="P0DP09">
    <property type="molecule type" value="protein"/>
</dbReference>
<dbReference type="ExpressionAtlas" id="P0DP09">
    <property type="expression patterns" value="baseline and differential"/>
</dbReference>
<dbReference type="GO" id="GO:0005576">
    <property type="term" value="C:extracellular region"/>
    <property type="evidence" value="ECO:0007669"/>
    <property type="project" value="UniProtKB-SubCell"/>
</dbReference>
<dbReference type="GO" id="GO:0019814">
    <property type="term" value="C:immunoglobulin complex"/>
    <property type="evidence" value="ECO:0000318"/>
    <property type="project" value="GO_Central"/>
</dbReference>
<dbReference type="GO" id="GO:0005886">
    <property type="term" value="C:plasma membrane"/>
    <property type="evidence" value="ECO:0007669"/>
    <property type="project" value="UniProtKB-SubCell"/>
</dbReference>
<dbReference type="GO" id="GO:0002250">
    <property type="term" value="P:adaptive immune response"/>
    <property type="evidence" value="ECO:0007669"/>
    <property type="project" value="UniProtKB-KW"/>
</dbReference>
<dbReference type="GO" id="GO:0006955">
    <property type="term" value="P:immune response"/>
    <property type="evidence" value="ECO:0000318"/>
    <property type="project" value="GO_Central"/>
</dbReference>
<dbReference type="CDD" id="cd04980">
    <property type="entry name" value="IgV_L_kappa"/>
    <property type="match status" value="1"/>
</dbReference>
<dbReference type="FunFam" id="2.60.40.10:FF:000212">
    <property type="entry name" value="Immunoglobulin kappa chain variable 12-38"/>
    <property type="match status" value="1"/>
</dbReference>
<dbReference type="Gene3D" id="2.60.40.10">
    <property type="entry name" value="Immunoglobulins"/>
    <property type="match status" value="1"/>
</dbReference>
<dbReference type="InterPro" id="IPR007110">
    <property type="entry name" value="Ig-like_dom"/>
</dbReference>
<dbReference type="InterPro" id="IPR036179">
    <property type="entry name" value="Ig-like_dom_sf"/>
</dbReference>
<dbReference type="InterPro" id="IPR013783">
    <property type="entry name" value="Ig-like_fold"/>
</dbReference>
<dbReference type="InterPro" id="IPR003599">
    <property type="entry name" value="Ig_sub"/>
</dbReference>
<dbReference type="InterPro" id="IPR013106">
    <property type="entry name" value="Ig_V-set"/>
</dbReference>
<dbReference type="InterPro" id="IPR050150">
    <property type="entry name" value="IgV_Light_Chain"/>
</dbReference>
<dbReference type="PANTHER" id="PTHR23267">
    <property type="entry name" value="IMMUNOGLOBULIN LIGHT CHAIN"/>
    <property type="match status" value="1"/>
</dbReference>
<dbReference type="Pfam" id="PF07686">
    <property type="entry name" value="V-set"/>
    <property type="match status" value="1"/>
</dbReference>
<dbReference type="SMART" id="SM00409">
    <property type="entry name" value="IG"/>
    <property type="match status" value="1"/>
</dbReference>
<dbReference type="SMART" id="SM00406">
    <property type="entry name" value="IGv"/>
    <property type="match status" value="1"/>
</dbReference>
<dbReference type="SUPFAM" id="SSF48726">
    <property type="entry name" value="Immunoglobulin"/>
    <property type="match status" value="1"/>
</dbReference>
<dbReference type="PROSITE" id="PS50835">
    <property type="entry name" value="IG_LIKE"/>
    <property type="match status" value="1"/>
</dbReference>
<accession>P0DP09</accession>
<sequence>MDMRVPAQLLGLLLLWLPGARCAIQLTQSPSSLSASVGDRVTITCRASQGISSALAWYQQKPGKAPKLLIYDASSLESGVPSRFSGSGSGTDFTLTISSLQPEDFATYYCQQFNSYP</sequence>
<comment type="function">
    <text evidence="5 6 7 8">V region of the variable domain of immunoglobulin light chains that participates in the antigen recognition (PubMed:24600447). Immunoglobulins, also known as antibodies, are membrane-bound or secreted glycoproteins produced by B lymphocytes. In the recognition phase of humoral immunity, the membrane-bound immunoglobulins serve as receptors which, upon binding of a specific antigen, trigger the clonal expansion and differentiation of B lymphocytes into immunoglobulins-secreting plasma cells. Secreted immunoglobulins mediate the effector phase of humoral immunity, which results in the elimination of bound antigens (PubMed:20176268, PubMed:22158414). The antigen binding site is formed by the variable domain of one heavy chain, together with that of its associated light chain. Thus, each immunoglobulin has two antigen binding sites with remarkable affinity for a particular antigen. The variable domains are assembled by a process called V-(D)-J rearrangement and can then be subjected to somatic hypermutations which, after exposure to antigen and selection, allow affinity maturation for a particular antigen (PubMed:17576170, PubMed:20176268).</text>
</comment>
<comment type="subunit">
    <text evidence="6">Immunoglobulins are composed of two identical heavy chains and two identical light chains; disulfide-linked.</text>
</comment>
<comment type="subcellular location">
    <subcellularLocation>
        <location evidence="6 7">Secreted</location>
    </subcellularLocation>
    <subcellularLocation>
        <location evidence="6 7">Cell membrane</location>
    </subcellularLocation>
</comment>
<comment type="polymorphism">
    <text evidence="10">There are several alleles. The sequence shown is that of the functional IMGT allele IGKV1-13*02 that is not represented on the reference genome assembly (GRCh38/hg38). The sequence of the reference genome assembly (GRCh38/hg38) is that of IMGT allele IGKV1-13*01 that is a pseudogene due to a stop codon polymorphism at position 57.</text>
</comment>
<comment type="caution">
    <text evidence="10">For an example of a full-length immunoglobulin kappa light chain see AC P0DOX7.</text>
</comment>
<evidence type="ECO:0000250" key="1">
    <source>
        <dbReference type="UniProtKB" id="P01602"/>
    </source>
</evidence>
<evidence type="ECO:0000255" key="2"/>
<evidence type="ECO:0000255" key="3">
    <source>
        <dbReference type="PROSITE-ProRule" id="PRU00114"/>
    </source>
</evidence>
<evidence type="ECO:0000303" key="4">
    <source>
    </source>
</evidence>
<evidence type="ECO:0000303" key="5">
    <source>
    </source>
</evidence>
<evidence type="ECO:0000303" key="6">
    <source>
    </source>
</evidence>
<evidence type="ECO:0000303" key="7">
    <source>
    </source>
</evidence>
<evidence type="ECO:0000303" key="8">
    <source>
    </source>
</evidence>
<evidence type="ECO:0000303" key="9">
    <source ref="4"/>
</evidence>
<evidence type="ECO:0000305" key="10"/>
<proteinExistence type="inferred from homology"/>
<gene>
    <name evidence="4 9" type="primary">IGKV1-13</name>
</gene>
<protein>
    <recommendedName>
        <fullName evidence="4 9">Immunoglobulin kappa variable 1-13</fullName>
    </recommendedName>
</protein>
<organism>
    <name type="scientific">Homo sapiens</name>
    <name type="common">Human</name>
    <dbReference type="NCBI Taxonomy" id="9606"/>
    <lineage>
        <taxon>Eukaryota</taxon>
        <taxon>Metazoa</taxon>
        <taxon>Chordata</taxon>
        <taxon>Craniata</taxon>
        <taxon>Vertebrata</taxon>
        <taxon>Euteleostomi</taxon>
        <taxon>Mammalia</taxon>
        <taxon>Eutheria</taxon>
        <taxon>Euarchontoglires</taxon>
        <taxon>Primates</taxon>
        <taxon>Haplorrhini</taxon>
        <taxon>Catarrhini</taxon>
        <taxon>Hominidae</taxon>
        <taxon>Homo</taxon>
    </lineage>
</organism>
<keyword id="KW-1064">Adaptive immunity</keyword>
<keyword id="KW-1003">Cell membrane</keyword>
<keyword id="KW-1015">Disulfide bond</keyword>
<keyword id="KW-0391">Immunity</keyword>
<keyword id="KW-1280">Immunoglobulin</keyword>
<keyword id="KW-0393">Immunoglobulin domain</keyword>
<keyword id="KW-0472">Membrane</keyword>
<keyword id="KW-1185">Reference proteome</keyword>
<keyword id="KW-0964">Secreted</keyword>
<keyword id="KW-0732">Signal</keyword>
<reference key="1">
    <citation type="journal article" date="1984" name="J. Mol. Biol.">
        <title>Organization and evolution of a gene cluster for human immunoglobulin variable regions of the kappa type.</title>
        <authorList>
            <person name="Pech M."/>
            <person name="Jaenichen H.R."/>
            <person name="Pohlenz H.D."/>
            <person name="Neumaier P.S."/>
            <person name="Klobeck H.G."/>
            <person name="Zachau H.G."/>
        </authorList>
    </citation>
    <scope>NUCLEOTIDE SEQUENCE [GENOMIC DNA] (IMGT ALLELE IGKV1-13*02)</scope>
</reference>
<reference key="2">
    <citation type="journal article" date="2005" name="Nature">
        <title>Generation and annotation of the DNA sequences of human chromosomes 2 and 4.</title>
        <authorList>
            <person name="Hillier L.W."/>
            <person name="Graves T.A."/>
            <person name="Fulton R.S."/>
            <person name="Fulton L.A."/>
            <person name="Pepin K.H."/>
            <person name="Minx P."/>
            <person name="Wagner-McPherson C."/>
            <person name="Layman D."/>
            <person name="Wylie K."/>
            <person name="Sekhon M."/>
            <person name="Becker M.C."/>
            <person name="Fewell G.A."/>
            <person name="Delehaunty K.D."/>
            <person name="Miner T.L."/>
            <person name="Nash W.E."/>
            <person name="Kremitzki C."/>
            <person name="Oddy L."/>
            <person name="Du H."/>
            <person name="Sun H."/>
            <person name="Bradshaw-Cordum H."/>
            <person name="Ali J."/>
            <person name="Carter J."/>
            <person name="Cordes M."/>
            <person name="Harris A."/>
            <person name="Isak A."/>
            <person name="van Brunt A."/>
            <person name="Nguyen C."/>
            <person name="Du F."/>
            <person name="Courtney L."/>
            <person name="Kalicki J."/>
            <person name="Ozersky P."/>
            <person name="Abbott S."/>
            <person name="Armstrong J."/>
            <person name="Belter E.A."/>
            <person name="Caruso L."/>
            <person name="Cedroni M."/>
            <person name="Cotton M."/>
            <person name="Davidson T."/>
            <person name="Desai A."/>
            <person name="Elliott G."/>
            <person name="Erb T."/>
            <person name="Fronick C."/>
            <person name="Gaige T."/>
            <person name="Haakenson W."/>
            <person name="Haglund K."/>
            <person name="Holmes A."/>
            <person name="Harkins R."/>
            <person name="Kim K."/>
            <person name="Kruchowski S.S."/>
            <person name="Strong C.M."/>
            <person name="Grewal N."/>
            <person name="Goyea E."/>
            <person name="Hou S."/>
            <person name="Levy A."/>
            <person name="Martinka S."/>
            <person name="Mead K."/>
            <person name="McLellan M.D."/>
            <person name="Meyer R."/>
            <person name="Randall-Maher J."/>
            <person name="Tomlinson C."/>
            <person name="Dauphin-Kohlberg S."/>
            <person name="Kozlowicz-Reilly A."/>
            <person name="Shah N."/>
            <person name="Swearengen-Shahid S."/>
            <person name="Snider J."/>
            <person name="Strong J.T."/>
            <person name="Thompson J."/>
            <person name="Yoakum M."/>
            <person name="Leonard S."/>
            <person name="Pearman C."/>
            <person name="Trani L."/>
            <person name="Radionenko M."/>
            <person name="Waligorski J.E."/>
            <person name="Wang C."/>
            <person name="Rock S.M."/>
            <person name="Tin-Wollam A.-M."/>
            <person name="Maupin R."/>
            <person name="Latreille P."/>
            <person name="Wendl M.C."/>
            <person name="Yang S.-P."/>
            <person name="Pohl C."/>
            <person name="Wallis J.W."/>
            <person name="Spieth J."/>
            <person name="Bieri T.A."/>
            <person name="Berkowicz N."/>
            <person name="Nelson J.O."/>
            <person name="Osborne J."/>
            <person name="Ding L."/>
            <person name="Meyer R."/>
            <person name="Sabo A."/>
            <person name="Shotland Y."/>
            <person name="Sinha P."/>
            <person name="Wohldmann P.E."/>
            <person name="Cook L.L."/>
            <person name="Hickenbotham M.T."/>
            <person name="Eldred J."/>
            <person name="Williams D."/>
            <person name="Jones T.A."/>
            <person name="She X."/>
            <person name="Ciccarelli F.D."/>
            <person name="Izaurralde E."/>
            <person name="Taylor J."/>
            <person name="Schmutz J."/>
            <person name="Myers R.M."/>
            <person name="Cox D.R."/>
            <person name="Huang X."/>
            <person name="McPherson J.D."/>
            <person name="Mardis E.R."/>
            <person name="Clifton S.W."/>
            <person name="Warren W.C."/>
            <person name="Chinwalla A.T."/>
            <person name="Eddy S.R."/>
            <person name="Marra M.A."/>
            <person name="Ovcharenko I."/>
            <person name="Furey T.S."/>
            <person name="Miller W."/>
            <person name="Eichler E.E."/>
            <person name="Bork P."/>
            <person name="Suyama M."/>
            <person name="Torrents D."/>
            <person name="Waterston R.H."/>
            <person name="Wilson R.K."/>
        </authorList>
    </citation>
    <scope>NUCLEOTIDE SEQUENCE [LARGE SCALE GENOMIC DNA] (IMGT IGKV1-13*01)</scope>
</reference>
<reference key="3">
    <citation type="journal article" date="2001" name="Exp. Clin. Immunogenet.">
        <title>Nomenclature of the human immunoglobulin kappa (IGK) genes.</title>
        <authorList>
            <person name="Lefranc M.P."/>
        </authorList>
    </citation>
    <scope>NOMEMCLATURE</scope>
</reference>
<reference key="4">
    <citation type="book" date="2001" name="The Immunoglobulin FactsBook.">
        <title>The Immunoglobulin FactsBook.</title>
        <editorList>
            <person name="Lefranc M.P."/>
            <person name="Lefranc G."/>
        </editorList>
        <authorList>
            <person name="Lefranc M.P."/>
            <person name="Lefranc G."/>
        </authorList>
    </citation>
    <scope>NOMENCLATURE</scope>
</reference>
<reference key="5">
    <citation type="journal article" date="2007" name="Annu. Rev. Genet.">
        <title>Immunoglobulin somatic hypermutation.</title>
        <authorList>
            <person name="Teng G."/>
            <person name="Papavasiliou F.N."/>
        </authorList>
    </citation>
    <scope>REVIEW ON SOMATIC HYPERMUTATION</scope>
</reference>
<reference key="6">
    <citation type="journal article" date="2010" name="J. Allergy Clin. Immunol.">
        <title>Structure and function of immunoglobulins.</title>
        <authorList>
            <person name="Schroeder H.W. Jr."/>
            <person name="Cavacini L."/>
        </authorList>
    </citation>
    <scope>REVIEW ON IMMUNOGLOBULINS</scope>
</reference>
<reference key="7">
    <citation type="journal article" date="2012" name="Nat. Rev. Immunol.">
        <title>Molecular programming of B cell memory.</title>
        <authorList>
            <person name="McHeyzer-Williams M."/>
            <person name="Okitsu S."/>
            <person name="Wang N."/>
            <person name="McHeyzer-Williams L."/>
        </authorList>
    </citation>
    <scope>REVIEW ON FUNCTION</scope>
</reference>
<reference key="8">
    <citation type="journal article" date="2014" name="Front. Immunol.">
        <title>Immunoglobulin and T Cell Receptor Genes: IMGT((R)) and the Birth and Rise of Immunoinformatics.</title>
        <authorList>
            <person name="Lefranc M.P."/>
        </authorList>
    </citation>
    <scope>NOMENCLATURE</scope>
</reference>
<name>KV113_HUMAN</name>
<feature type="signal peptide" evidence="2">
    <location>
        <begin position="1"/>
        <end position="22"/>
    </location>
</feature>
<feature type="chain" id="PRO_0000439560" description="Immunoglobulin kappa variable 1-13" evidence="2">
    <location>
        <begin position="23"/>
        <end position="117"/>
    </location>
</feature>
<feature type="domain" description="Ig-like" evidence="3">
    <location>
        <begin position="23"/>
        <end position="117" status="greater than"/>
    </location>
</feature>
<feature type="region of interest" description="Framework-1" evidence="1">
    <location>
        <begin position="23"/>
        <end position="45"/>
    </location>
</feature>
<feature type="region of interest" description="Complementarity-determining-1" evidence="1">
    <location>
        <begin position="46"/>
        <end position="56"/>
    </location>
</feature>
<feature type="region of interest" description="Framework-2" evidence="1">
    <location>
        <begin position="57"/>
        <end position="71"/>
    </location>
</feature>
<feature type="region of interest" description="Complementarity-determining-2" evidence="1">
    <location>
        <begin position="72"/>
        <end position="78"/>
    </location>
</feature>
<feature type="region of interest" description="Framework-3" evidence="1">
    <location>
        <begin position="79"/>
        <end position="110"/>
    </location>
</feature>
<feature type="region of interest" description="Complementarity-determining-3" evidence="1">
    <location>
        <begin position="111"/>
        <end position="117" status="greater than"/>
    </location>
</feature>
<feature type="disulfide bond" evidence="3">
    <location>
        <begin position="45"/>
        <end position="110"/>
    </location>
</feature>
<feature type="non-terminal residue">
    <location>
        <position position="117"/>
    </location>
</feature>